<proteinExistence type="evidence at protein level"/>
<organism>
    <name type="scientific">Euschistus servus</name>
    <name type="common">Brown stink bug</name>
    <dbReference type="NCBI Taxonomy" id="756488"/>
    <lineage>
        <taxon>Eukaryota</taxon>
        <taxon>Metazoa</taxon>
        <taxon>Ecdysozoa</taxon>
        <taxon>Arthropoda</taxon>
        <taxon>Hexapoda</taxon>
        <taxon>Insecta</taxon>
        <taxon>Pterygota</taxon>
        <taxon>Neoptera</taxon>
        <taxon>Paraneoptera</taxon>
        <taxon>Hemiptera</taxon>
        <taxon>Heteroptera</taxon>
        <taxon>Panheteroptera</taxon>
        <taxon>Pentatomomorpha</taxon>
        <taxon>Pentatomoidea</taxon>
        <taxon>Pentatomidae</taxon>
        <taxon>Pentatominae</taxon>
        <taxon>Euschistus</taxon>
    </lineage>
</organism>
<evidence type="ECO:0000269" key="1">
    <source>
    </source>
</evidence>
<evidence type="ECO:0000303" key="2">
    <source>
    </source>
</evidence>
<evidence type="ECO:0000305" key="3"/>
<protein>
    <recommendedName>
        <fullName evidence="2">Tachykinin-related peptide 4</fullName>
        <shortName evidence="2">TKRP-4</shortName>
    </recommendedName>
</protein>
<accession>P86572</accession>
<feature type="peptide" id="PRO_0000395641" description="Tachykinin-related peptide 4" evidence="1">
    <location>
        <begin position="1"/>
        <end position="10"/>
    </location>
</feature>
<feature type="modified residue" description="Arginine amide" evidence="1">
    <location>
        <position position="10"/>
    </location>
</feature>
<keyword id="KW-0027">Amidation</keyword>
<keyword id="KW-0903">Direct protein sequencing</keyword>
<keyword id="KW-0527">Neuropeptide</keyword>
<keyword id="KW-0964">Secreted</keyword>
<comment type="subcellular location">
    <subcellularLocation>
        <location evidence="1 3">Secreted</location>
    </subcellularLocation>
</comment>
<comment type="tissue specificity">
    <text evidence="1">Expressed in the antennal lobe (at protein level).</text>
</comment>
<name>TRP4_EUSSE</name>
<reference evidence="3" key="1">
    <citation type="journal article" date="2009" name="Peptides">
        <title>Neuropeptides in Heteroptera: identification of allatotropin-related peptide and tachykinin-related peptides using MALDI-TOF mass spectrometry.</title>
        <authorList>
            <person name="Neupert S."/>
            <person name="Russell W.K."/>
            <person name="Russell D.H."/>
            <person name="Lopez J.D. Jr."/>
            <person name="Predel R."/>
            <person name="Nachman R.J."/>
        </authorList>
    </citation>
    <scope>PROTEIN SEQUENCE</scope>
    <scope>SUBCELLULAR LOCATION</scope>
    <scope>TISSUE SPECIFICITY</scope>
    <scope>AMIDATION AT ARG-10</scope>
    <source>
        <tissue evidence="1">Antennal lobe</tissue>
    </source>
</reference>
<sequence length="10" mass="1056">SPASGFFGMR</sequence>
<dbReference type="GO" id="GO:0005576">
    <property type="term" value="C:extracellular region"/>
    <property type="evidence" value="ECO:0007005"/>
    <property type="project" value="UniProtKB"/>
</dbReference>
<dbReference type="GO" id="GO:0007218">
    <property type="term" value="P:neuropeptide signaling pathway"/>
    <property type="evidence" value="ECO:0007669"/>
    <property type="project" value="UniProtKB-KW"/>
</dbReference>